<dbReference type="EMBL" id="AE009951">
    <property type="protein sequence ID" value="AAL93682.1"/>
    <property type="molecule type" value="Genomic_DNA"/>
</dbReference>
<dbReference type="RefSeq" id="NP_602383.1">
    <property type="nucleotide sequence ID" value="NC_003454.1"/>
</dbReference>
<dbReference type="RefSeq" id="WP_011015672.1">
    <property type="nucleotide sequence ID" value="NZ_CP028101.1"/>
</dbReference>
<dbReference type="SMR" id="Q8R602"/>
<dbReference type="FunCoup" id="Q8R602">
    <property type="interactions" value="397"/>
</dbReference>
<dbReference type="STRING" id="190304.FN1556"/>
<dbReference type="PaxDb" id="190304-FN1556"/>
<dbReference type="EnsemblBacteria" id="AAL93682">
    <property type="protein sequence ID" value="AAL93682"/>
    <property type="gene ID" value="FN1556"/>
</dbReference>
<dbReference type="GeneID" id="79782497"/>
<dbReference type="KEGG" id="fnu:FN1556"/>
<dbReference type="PATRIC" id="fig|190304.8.peg.59"/>
<dbReference type="eggNOG" id="COG0480">
    <property type="taxonomic scope" value="Bacteria"/>
</dbReference>
<dbReference type="HOGENOM" id="CLU_002794_4_1_0"/>
<dbReference type="InParanoid" id="Q8R602"/>
<dbReference type="BioCyc" id="FNUC190304:G1FZS-60-MONOMER"/>
<dbReference type="Proteomes" id="UP000002521">
    <property type="component" value="Chromosome"/>
</dbReference>
<dbReference type="GO" id="GO:0005737">
    <property type="term" value="C:cytoplasm"/>
    <property type="evidence" value="ECO:0007669"/>
    <property type="project" value="UniProtKB-SubCell"/>
</dbReference>
<dbReference type="GO" id="GO:0005525">
    <property type="term" value="F:GTP binding"/>
    <property type="evidence" value="ECO:0007669"/>
    <property type="project" value="UniProtKB-UniRule"/>
</dbReference>
<dbReference type="GO" id="GO:0003924">
    <property type="term" value="F:GTPase activity"/>
    <property type="evidence" value="ECO:0007669"/>
    <property type="project" value="InterPro"/>
</dbReference>
<dbReference type="GO" id="GO:0003746">
    <property type="term" value="F:translation elongation factor activity"/>
    <property type="evidence" value="ECO:0007669"/>
    <property type="project" value="UniProtKB-UniRule"/>
</dbReference>
<dbReference type="GO" id="GO:0032790">
    <property type="term" value="P:ribosome disassembly"/>
    <property type="evidence" value="ECO:0000318"/>
    <property type="project" value="GO_Central"/>
</dbReference>
<dbReference type="CDD" id="cd01886">
    <property type="entry name" value="EF-G"/>
    <property type="match status" value="1"/>
</dbReference>
<dbReference type="CDD" id="cd16262">
    <property type="entry name" value="EFG_III"/>
    <property type="match status" value="1"/>
</dbReference>
<dbReference type="CDD" id="cd01434">
    <property type="entry name" value="EFG_mtEFG1_IV"/>
    <property type="match status" value="1"/>
</dbReference>
<dbReference type="CDD" id="cd03713">
    <property type="entry name" value="EFG_mtEFG_C"/>
    <property type="match status" value="1"/>
</dbReference>
<dbReference type="CDD" id="cd04088">
    <property type="entry name" value="EFG_mtEFG_II"/>
    <property type="match status" value="1"/>
</dbReference>
<dbReference type="FunFam" id="2.40.30.10:FF:000006">
    <property type="entry name" value="Elongation factor G"/>
    <property type="match status" value="1"/>
</dbReference>
<dbReference type="FunFam" id="3.30.230.10:FF:000003">
    <property type="entry name" value="Elongation factor G"/>
    <property type="match status" value="1"/>
</dbReference>
<dbReference type="FunFam" id="3.30.70.240:FF:000001">
    <property type="entry name" value="Elongation factor G"/>
    <property type="match status" value="1"/>
</dbReference>
<dbReference type="FunFam" id="3.30.70.870:FF:000001">
    <property type="entry name" value="Elongation factor G"/>
    <property type="match status" value="1"/>
</dbReference>
<dbReference type="FunFam" id="3.40.50.300:FF:000029">
    <property type="entry name" value="Elongation factor G"/>
    <property type="match status" value="1"/>
</dbReference>
<dbReference type="Gene3D" id="3.30.230.10">
    <property type="match status" value="1"/>
</dbReference>
<dbReference type="Gene3D" id="3.30.70.240">
    <property type="match status" value="1"/>
</dbReference>
<dbReference type="Gene3D" id="3.30.70.870">
    <property type="entry name" value="Elongation Factor G (Translational Gtpase), domain 3"/>
    <property type="match status" value="1"/>
</dbReference>
<dbReference type="Gene3D" id="3.40.50.300">
    <property type="entry name" value="P-loop containing nucleotide triphosphate hydrolases"/>
    <property type="match status" value="1"/>
</dbReference>
<dbReference type="Gene3D" id="2.40.30.10">
    <property type="entry name" value="Translation factors"/>
    <property type="match status" value="1"/>
</dbReference>
<dbReference type="HAMAP" id="MF_00054_B">
    <property type="entry name" value="EF_G_EF_2_B"/>
    <property type="match status" value="1"/>
</dbReference>
<dbReference type="InterPro" id="IPR041095">
    <property type="entry name" value="EFG_II"/>
</dbReference>
<dbReference type="InterPro" id="IPR009022">
    <property type="entry name" value="EFG_III"/>
</dbReference>
<dbReference type="InterPro" id="IPR035647">
    <property type="entry name" value="EFG_III/V"/>
</dbReference>
<dbReference type="InterPro" id="IPR047872">
    <property type="entry name" value="EFG_IV"/>
</dbReference>
<dbReference type="InterPro" id="IPR035649">
    <property type="entry name" value="EFG_V"/>
</dbReference>
<dbReference type="InterPro" id="IPR000640">
    <property type="entry name" value="EFG_V-like"/>
</dbReference>
<dbReference type="InterPro" id="IPR004161">
    <property type="entry name" value="EFTu-like_2"/>
</dbReference>
<dbReference type="InterPro" id="IPR031157">
    <property type="entry name" value="G_TR_CS"/>
</dbReference>
<dbReference type="InterPro" id="IPR027417">
    <property type="entry name" value="P-loop_NTPase"/>
</dbReference>
<dbReference type="InterPro" id="IPR020568">
    <property type="entry name" value="Ribosomal_Su5_D2-typ_SF"/>
</dbReference>
<dbReference type="InterPro" id="IPR014721">
    <property type="entry name" value="Ribsml_uS5_D2-typ_fold_subgr"/>
</dbReference>
<dbReference type="InterPro" id="IPR005225">
    <property type="entry name" value="Small_GTP-bd"/>
</dbReference>
<dbReference type="InterPro" id="IPR000795">
    <property type="entry name" value="T_Tr_GTP-bd_dom"/>
</dbReference>
<dbReference type="InterPro" id="IPR009000">
    <property type="entry name" value="Transl_B-barrel_sf"/>
</dbReference>
<dbReference type="InterPro" id="IPR004540">
    <property type="entry name" value="Transl_elong_EFG/EF2"/>
</dbReference>
<dbReference type="InterPro" id="IPR005517">
    <property type="entry name" value="Transl_elong_EFG/EF2_IV"/>
</dbReference>
<dbReference type="NCBIfam" id="TIGR00484">
    <property type="entry name" value="EF-G"/>
    <property type="match status" value="1"/>
</dbReference>
<dbReference type="NCBIfam" id="NF009379">
    <property type="entry name" value="PRK12740.1-3"/>
    <property type="match status" value="1"/>
</dbReference>
<dbReference type="NCBIfam" id="NF009381">
    <property type="entry name" value="PRK12740.1-5"/>
    <property type="match status" value="1"/>
</dbReference>
<dbReference type="NCBIfam" id="TIGR00231">
    <property type="entry name" value="small_GTP"/>
    <property type="match status" value="1"/>
</dbReference>
<dbReference type="PANTHER" id="PTHR43261:SF1">
    <property type="entry name" value="RIBOSOME-RELEASING FACTOR 2, MITOCHONDRIAL"/>
    <property type="match status" value="1"/>
</dbReference>
<dbReference type="PANTHER" id="PTHR43261">
    <property type="entry name" value="TRANSLATION ELONGATION FACTOR G-RELATED"/>
    <property type="match status" value="1"/>
</dbReference>
<dbReference type="Pfam" id="PF00679">
    <property type="entry name" value="EFG_C"/>
    <property type="match status" value="1"/>
</dbReference>
<dbReference type="Pfam" id="PF14492">
    <property type="entry name" value="EFG_III"/>
    <property type="match status" value="1"/>
</dbReference>
<dbReference type="Pfam" id="PF03764">
    <property type="entry name" value="EFG_IV"/>
    <property type="match status" value="1"/>
</dbReference>
<dbReference type="Pfam" id="PF00009">
    <property type="entry name" value="GTP_EFTU"/>
    <property type="match status" value="1"/>
</dbReference>
<dbReference type="Pfam" id="PF03144">
    <property type="entry name" value="GTP_EFTU_D2"/>
    <property type="match status" value="1"/>
</dbReference>
<dbReference type="PRINTS" id="PR00315">
    <property type="entry name" value="ELONGATNFCT"/>
</dbReference>
<dbReference type="SMART" id="SM00838">
    <property type="entry name" value="EFG_C"/>
    <property type="match status" value="1"/>
</dbReference>
<dbReference type="SMART" id="SM00889">
    <property type="entry name" value="EFG_IV"/>
    <property type="match status" value="1"/>
</dbReference>
<dbReference type="SUPFAM" id="SSF54980">
    <property type="entry name" value="EF-G C-terminal domain-like"/>
    <property type="match status" value="2"/>
</dbReference>
<dbReference type="SUPFAM" id="SSF52540">
    <property type="entry name" value="P-loop containing nucleoside triphosphate hydrolases"/>
    <property type="match status" value="1"/>
</dbReference>
<dbReference type="SUPFAM" id="SSF54211">
    <property type="entry name" value="Ribosomal protein S5 domain 2-like"/>
    <property type="match status" value="1"/>
</dbReference>
<dbReference type="SUPFAM" id="SSF50447">
    <property type="entry name" value="Translation proteins"/>
    <property type="match status" value="1"/>
</dbReference>
<dbReference type="PROSITE" id="PS00301">
    <property type="entry name" value="G_TR_1"/>
    <property type="match status" value="1"/>
</dbReference>
<dbReference type="PROSITE" id="PS51722">
    <property type="entry name" value="G_TR_2"/>
    <property type="match status" value="1"/>
</dbReference>
<keyword id="KW-0963">Cytoplasm</keyword>
<keyword id="KW-0251">Elongation factor</keyword>
<keyword id="KW-0342">GTP-binding</keyword>
<keyword id="KW-0547">Nucleotide-binding</keyword>
<keyword id="KW-0648">Protein biosynthesis</keyword>
<keyword id="KW-1185">Reference proteome</keyword>
<organism>
    <name type="scientific">Fusobacterium nucleatum subsp. nucleatum (strain ATCC 25586 / DSM 15643 / BCRC 10681 / CIP 101130 / JCM 8532 / KCTC 2640 / LMG 13131 / VPI 4355)</name>
    <dbReference type="NCBI Taxonomy" id="190304"/>
    <lineage>
        <taxon>Bacteria</taxon>
        <taxon>Fusobacteriati</taxon>
        <taxon>Fusobacteriota</taxon>
        <taxon>Fusobacteriia</taxon>
        <taxon>Fusobacteriales</taxon>
        <taxon>Fusobacteriaceae</taxon>
        <taxon>Fusobacterium</taxon>
    </lineage>
</organism>
<sequence>MARKISLDMTRNVGIMAHIDAGKTTTTERILFYTGVERKLKEVHEGQATMDWMEQEQERGITITSAATTCFWKGHRINIIDTPGHVDFTVEVERSLRVLDGAVAVFSAVDGVQPQSETVWRQADKYKVPRLAFFNKMDRIGANFDMCVSDIKEKLGSNPVPIQIPIGAEDQFEGVVDLIEMKEIVWPVDSDQGQHFDVKDIRAELKEKAEETRQYMLESIVETDDALMEKFFGGEEITKEEIIKGLRKATIDNTIVPVVCGTAFKNKGIQALLDAIVNYMPAPTDVAMVEGRDPKNPDVLIDREMSDDAPFAALAFKVMTDPFVGRLTFFRVYSGFVEKGATVLNSTKGKKERMGRILQMHANNREEIEHVYCGDIAAAVGLKDTATGDTLCAENAPIVLEQMEFPEPVISVAVEPKTKNDQEKMGIALSKLAEEDPTFKVRTDEETGQTIISGMGELHLEIIVDRMKREFKVESNVGKPQVAYRETITQSCDQEVKYAKQSGGRGQYGHVKIILEPNPGKEFEFVNKITGGVIPREYIPAVEKGCKEALESGVIAGYPLVDVKVTLYDGSYHEVDSSEMAFKIAGSMALKQAATKAKPVILEPVFKVEVTTPEEYMGDIIGDLNSRRGMVSGMIDRNGAKIITAKVPLSEMFGYATDLRSKSQGRATYSWEFSEYLQVPASIQKQIQEERGK</sequence>
<reference key="1">
    <citation type="journal article" date="2002" name="J. Bacteriol.">
        <title>Genome sequence and analysis of the oral bacterium Fusobacterium nucleatum strain ATCC 25586.</title>
        <authorList>
            <person name="Kapatral V."/>
            <person name="Anderson I."/>
            <person name="Ivanova N."/>
            <person name="Reznik G."/>
            <person name="Los T."/>
            <person name="Lykidis A."/>
            <person name="Bhattacharyya A."/>
            <person name="Bartman A."/>
            <person name="Gardner W."/>
            <person name="Grechkin G."/>
            <person name="Zhu L."/>
            <person name="Vasieva O."/>
            <person name="Chu L."/>
            <person name="Kogan Y."/>
            <person name="Chaga O."/>
            <person name="Goltsman E."/>
            <person name="Bernal A."/>
            <person name="Larsen N."/>
            <person name="D'Souza M."/>
            <person name="Walunas T."/>
            <person name="Pusch G."/>
            <person name="Haselkorn R."/>
            <person name="Fonstein M."/>
            <person name="Kyrpides N.C."/>
            <person name="Overbeek R."/>
        </authorList>
    </citation>
    <scope>NUCLEOTIDE SEQUENCE [LARGE SCALE GENOMIC DNA]</scope>
    <source>
        <strain>ATCC 25586 / DSM 15643 / BCRC 10681 / CIP 101130 / JCM 8532 / KCTC 2640 / LMG 13131 / VPI 4355</strain>
    </source>
</reference>
<accession>Q8R602</accession>
<evidence type="ECO:0000255" key="1">
    <source>
        <dbReference type="HAMAP-Rule" id="MF_00054"/>
    </source>
</evidence>
<feature type="chain" id="PRO_0000091125" description="Elongation factor G">
    <location>
        <begin position="1"/>
        <end position="693"/>
    </location>
</feature>
<feature type="domain" description="tr-type G">
    <location>
        <begin position="8"/>
        <end position="284"/>
    </location>
</feature>
<feature type="binding site" evidence="1">
    <location>
        <begin position="17"/>
        <end position="24"/>
    </location>
    <ligand>
        <name>GTP</name>
        <dbReference type="ChEBI" id="CHEBI:37565"/>
    </ligand>
</feature>
<feature type="binding site" evidence="1">
    <location>
        <begin position="81"/>
        <end position="85"/>
    </location>
    <ligand>
        <name>GTP</name>
        <dbReference type="ChEBI" id="CHEBI:37565"/>
    </ligand>
</feature>
<feature type="binding site" evidence="1">
    <location>
        <begin position="135"/>
        <end position="138"/>
    </location>
    <ligand>
        <name>GTP</name>
        <dbReference type="ChEBI" id="CHEBI:37565"/>
    </ligand>
</feature>
<name>EFG_FUSNN</name>
<gene>
    <name evidence="1" type="primary">fusA</name>
    <name type="ordered locus">FN1556</name>
</gene>
<protein>
    <recommendedName>
        <fullName evidence="1">Elongation factor G</fullName>
        <shortName evidence="1">EF-G</shortName>
    </recommendedName>
</protein>
<comment type="function">
    <text evidence="1">Catalyzes the GTP-dependent ribosomal translocation step during translation elongation. During this step, the ribosome changes from the pre-translocational (PRE) to the post-translocational (POST) state as the newly formed A-site-bound peptidyl-tRNA and P-site-bound deacylated tRNA move to the P and E sites, respectively. Catalyzes the coordinated movement of the two tRNA molecules, the mRNA and conformational changes in the ribosome.</text>
</comment>
<comment type="subcellular location">
    <subcellularLocation>
        <location evidence="1">Cytoplasm</location>
    </subcellularLocation>
</comment>
<comment type="similarity">
    <text evidence="1">Belongs to the TRAFAC class translation factor GTPase superfamily. Classic translation factor GTPase family. EF-G/EF-2 subfamily.</text>
</comment>
<proteinExistence type="inferred from homology"/>